<gene>
    <name evidence="1" type="primary">xylA</name>
    <name type="ordered locus">YPA_4128</name>
</gene>
<sequence length="439" mass="49550">MQSYFNELEQVRYEGSQSTNPLAFHHYNPDEMILGKRMADHLRFAACYWHTFCWGGADMFGANAFDRPWQQPGDALALAKRKAEVAFEFFHKLNVPYYCFHDVDVSPEGASLQEYLNNFAVMTDVLAEKQAASGVKLLWGTANCFTHPRYGAGAATNPDPEVFSWAATQVFTAMNATRQLGGENYVLWGGREGYETLLNTDLRQEREQIGRFMQMVVEHKHKTGFQGTLLIEPKPQEPTKHQYDYDVATVYGFLKQFGLEKEIKVNIEANHATLAGHSFHHEIASAIALGIFGSVDANRGDPQLGWDTDQFPNSVEENTLVMFEILKAGGFTTGGLNFDAKVRRQSTDKYDLFYGHIGAMDTMALALKFAAKMIEDGQLDQIVAKRYAGWNSELGQQILQGKMSLEELSRYASQHNLNPQHQSGHQELLENKVNRYLFG</sequence>
<accession>Q1C0D3</accession>
<comment type="catalytic activity">
    <reaction evidence="1">
        <text>alpha-D-xylose = alpha-D-xylulofuranose</text>
        <dbReference type="Rhea" id="RHEA:22816"/>
        <dbReference type="ChEBI" id="CHEBI:28518"/>
        <dbReference type="ChEBI" id="CHEBI:188998"/>
        <dbReference type="EC" id="5.3.1.5"/>
    </reaction>
</comment>
<comment type="cofactor">
    <cofactor evidence="1">
        <name>Mg(2+)</name>
        <dbReference type="ChEBI" id="CHEBI:18420"/>
    </cofactor>
    <text evidence="1">Binds 2 magnesium ions per subunit.</text>
</comment>
<comment type="subunit">
    <text evidence="1">Homotetramer.</text>
</comment>
<comment type="subcellular location">
    <subcellularLocation>
        <location evidence="1">Cytoplasm</location>
    </subcellularLocation>
</comment>
<comment type="similarity">
    <text evidence="1">Belongs to the xylose isomerase family.</text>
</comment>
<feature type="chain" id="PRO_1000026460" description="Xylose isomerase">
    <location>
        <begin position="1"/>
        <end position="439"/>
    </location>
</feature>
<feature type="active site" evidence="1">
    <location>
        <position position="101"/>
    </location>
</feature>
<feature type="active site" evidence="1">
    <location>
        <position position="104"/>
    </location>
</feature>
<feature type="binding site" evidence="1">
    <location>
        <position position="232"/>
    </location>
    <ligand>
        <name>Mg(2+)</name>
        <dbReference type="ChEBI" id="CHEBI:18420"/>
        <label>1</label>
    </ligand>
</feature>
<feature type="binding site" evidence="1">
    <location>
        <position position="268"/>
    </location>
    <ligand>
        <name>Mg(2+)</name>
        <dbReference type="ChEBI" id="CHEBI:18420"/>
        <label>1</label>
    </ligand>
</feature>
<feature type="binding site" evidence="1">
    <location>
        <position position="268"/>
    </location>
    <ligand>
        <name>Mg(2+)</name>
        <dbReference type="ChEBI" id="CHEBI:18420"/>
        <label>2</label>
    </ligand>
</feature>
<feature type="binding site" evidence="1">
    <location>
        <position position="271"/>
    </location>
    <ligand>
        <name>Mg(2+)</name>
        <dbReference type="ChEBI" id="CHEBI:18420"/>
        <label>2</label>
    </ligand>
</feature>
<feature type="binding site" evidence="1">
    <location>
        <position position="296"/>
    </location>
    <ligand>
        <name>Mg(2+)</name>
        <dbReference type="ChEBI" id="CHEBI:18420"/>
        <label>1</label>
    </ligand>
</feature>
<feature type="binding site" evidence="1">
    <location>
        <position position="307"/>
    </location>
    <ligand>
        <name>Mg(2+)</name>
        <dbReference type="ChEBI" id="CHEBI:18420"/>
        <label>2</label>
    </ligand>
</feature>
<feature type="binding site" evidence="1">
    <location>
        <position position="309"/>
    </location>
    <ligand>
        <name>Mg(2+)</name>
        <dbReference type="ChEBI" id="CHEBI:18420"/>
        <label>2</label>
    </ligand>
</feature>
<feature type="binding site" evidence="1">
    <location>
        <position position="339"/>
    </location>
    <ligand>
        <name>Mg(2+)</name>
        <dbReference type="ChEBI" id="CHEBI:18420"/>
        <label>1</label>
    </ligand>
</feature>
<dbReference type="EC" id="5.3.1.5" evidence="1"/>
<dbReference type="EMBL" id="CP000308">
    <property type="protein sequence ID" value="ABG16089.1"/>
    <property type="molecule type" value="Genomic_DNA"/>
</dbReference>
<dbReference type="RefSeq" id="WP_002209593.1">
    <property type="nucleotide sequence ID" value="NZ_CP009906.1"/>
</dbReference>
<dbReference type="SMR" id="Q1C0D3"/>
<dbReference type="GeneID" id="57974675"/>
<dbReference type="KEGG" id="ypa:YPA_4128"/>
<dbReference type="Proteomes" id="UP000001971">
    <property type="component" value="Chromosome"/>
</dbReference>
<dbReference type="GO" id="GO:0005737">
    <property type="term" value="C:cytoplasm"/>
    <property type="evidence" value="ECO:0007669"/>
    <property type="project" value="UniProtKB-SubCell"/>
</dbReference>
<dbReference type="GO" id="GO:0000287">
    <property type="term" value="F:magnesium ion binding"/>
    <property type="evidence" value="ECO:0007669"/>
    <property type="project" value="UniProtKB-UniRule"/>
</dbReference>
<dbReference type="GO" id="GO:0009045">
    <property type="term" value="F:xylose isomerase activity"/>
    <property type="evidence" value="ECO:0007669"/>
    <property type="project" value="UniProtKB-UniRule"/>
</dbReference>
<dbReference type="GO" id="GO:0042732">
    <property type="term" value="P:D-xylose metabolic process"/>
    <property type="evidence" value="ECO:0007669"/>
    <property type="project" value="UniProtKB-UniRule"/>
</dbReference>
<dbReference type="FunFam" id="3.20.20.150:FF:000002">
    <property type="entry name" value="Xylose isomerase"/>
    <property type="match status" value="1"/>
</dbReference>
<dbReference type="Gene3D" id="3.20.20.150">
    <property type="entry name" value="Divalent-metal-dependent TIM barrel enzymes"/>
    <property type="match status" value="1"/>
</dbReference>
<dbReference type="HAMAP" id="MF_00455">
    <property type="entry name" value="Xylose_isom_A"/>
    <property type="match status" value="1"/>
</dbReference>
<dbReference type="InterPro" id="IPR036237">
    <property type="entry name" value="Xyl_isomerase-like_sf"/>
</dbReference>
<dbReference type="InterPro" id="IPR013452">
    <property type="entry name" value="Xylose_isom_bac"/>
</dbReference>
<dbReference type="InterPro" id="IPR001998">
    <property type="entry name" value="Xylose_isomerase"/>
</dbReference>
<dbReference type="NCBIfam" id="NF003998">
    <property type="entry name" value="PRK05474.1"/>
    <property type="match status" value="1"/>
</dbReference>
<dbReference type="NCBIfam" id="TIGR02630">
    <property type="entry name" value="xylose_isom_A"/>
    <property type="match status" value="1"/>
</dbReference>
<dbReference type="PANTHER" id="PTHR48408">
    <property type="match status" value="1"/>
</dbReference>
<dbReference type="PANTHER" id="PTHR48408:SF1">
    <property type="entry name" value="XYLOSE ISOMERASE"/>
    <property type="match status" value="1"/>
</dbReference>
<dbReference type="PRINTS" id="PR00688">
    <property type="entry name" value="XYLOSISMRASE"/>
</dbReference>
<dbReference type="SUPFAM" id="SSF51658">
    <property type="entry name" value="Xylose isomerase-like"/>
    <property type="match status" value="1"/>
</dbReference>
<dbReference type="PROSITE" id="PS51415">
    <property type="entry name" value="XYLOSE_ISOMERASE"/>
    <property type="match status" value="1"/>
</dbReference>
<keyword id="KW-0119">Carbohydrate metabolism</keyword>
<keyword id="KW-0963">Cytoplasm</keyword>
<keyword id="KW-0413">Isomerase</keyword>
<keyword id="KW-0460">Magnesium</keyword>
<keyword id="KW-0479">Metal-binding</keyword>
<keyword id="KW-0859">Xylose metabolism</keyword>
<evidence type="ECO:0000255" key="1">
    <source>
        <dbReference type="HAMAP-Rule" id="MF_00455"/>
    </source>
</evidence>
<organism>
    <name type="scientific">Yersinia pestis bv. Antiqua (strain Antiqua)</name>
    <dbReference type="NCBI Taxonomy" id="360102"/>
    <lineage>
        <taxon>Bacteria</taxon>
        <taxon>Pseudomonadati</taxon>
        <taxon>Pseudomonadota</taxon>
        <taxon>Gammaproteobacteria</taxon>
        <taxon>Enterobacterales</taxon>
        <taxon>Yersiniaceae</taxon>
        <taxon>Yersinia</taxon>
    </lineage>
</organism>
<reference key="1">
    <citation type="journal article" date="2006" name="J. Bacteriol.">
        <title>Complete genome sequence of Yersinia pestis strains Antiqua and Nepal516: evidence of gene reduction in an emerging pathogen.</title>
        <authorList>
            <person name="Chain P.S.G."/>
            <person name="Hu P."/>
            <person name="Malfatti S.A."/>
            <person name="Radnedge L."/>
            <person name="Larimer F."/>
            <person name="Vergez L.M."/>
            <person name="Worsham P."/>
            <person name="Chu M.C."/>
            <person name="Andersen G.L."/>
        </authorList>
    </citation>
    <scope>NUCLEOTIDE SEQUENCE [LARGE SCALE GENOMIC DNA]</scope>
    <source>
        <strain>Antiqua</strain>
    </source>
</reference>
<name>XYLA_YERPA</name>
<protein>
    <recommendedName>
        <fullName evidence="1">Xylose isomerase</fullName>
        <ecNumber evidence="1">5.3.1.5</ecNumber>
    </recommendedName>
</protein>
<proteinExistence type="inferred from homology"/>